<name>RPO6_THEPD</name>
<accession>A1RWX0</accession>
<protein>
    <recommendedName>
        <fullName evidence="1">DNA-directed RNA polymerase subunit Rpo6</fullName>
        <ecNumber evidence="1">2.7.7.6</ecNumber>
    </recommendedName>
    <alternativeName>
        <fullName evidence="1">DNA-directed RNA polymerase subunit K</fullName>
    </alternativeName>
</protein>
<reference key="1">
    <citation type="journal article" date="2008" name="J. Bacteriol.">
        <title>Genome sequence of Thermofilum pendens reveals an exceptional loss of biosynthetic pathways without genome reduction.</title>
        <authorList>
            <person name="Anderson I."/>
            <person name="Rodriguez J."/>
            <person name="Susanti D."/>
            <person name="Porat I."/>
            <person name="Reich C."/>
            <person name="Ulrich L.E."/>
            <person name="Elkins J.G."/>
            <person name="Mavromatis K."/>
            <person name="Lykidis A."/>
            <person name="Kim E."/>
            <person name="Thompson L.S."/>
            <person name="Nolan M."/>
            <person name="Land M."/>
            <person name="Copeland A."/>
            <person name="Lapidus A."/>
            <person name="Lucas S."/>
            <person name="Detter C."/>
            <person name="Zhulin I.B."/>
            <person name="Olsen G.J."/>
            <person name="Whitman W."/>
            <person name="Mukhopadhyay B."/>
            <person name="Bristow J."/>
            <person name="Kyrpides N."/>
        </authorList>
    </citation>
    <scope>NUCLEOTIDE SEQUENCE [LARGE SCALE GENOMIC DNA]</scope>
    <source>
        <strain>DSM 2475 / Hrk 5</strain>
    </source>
</reference>
<keyword id="KW-0963">Cytoplasm</keyword>
<keyword id="KW-0240">DNA-directed RNA polymerase</keyword>
<keyword id="KW-0548">Nucleotidyltransferase</keyword>
<keyword id="KW-1185">Reference proteome</keyword>
<keyword id="KW-0804">Transcription</keyword>
<keyword id="KW-0808">Transferase</keyword>
<organism>
    <name type="scientific">Thermofilum pendens (strain DSM 2475 / Hrk 5)</name>
    <dbReference type="NCBI Taxonomy" id="368408"/>
    <lineage>
        <taxon>Archaea</taxon>
        <taxon>Thermoproteota</taxon>
        <taxon>Thermoprotei</taxon>
        <taxon>Thermofilales</taxon>
        <taxon>Thermofilaceae</taxon>
        <taxon>Thermofilum</taxon>
    </lineage>
</organism>
<proteinExistence type="inferred from homology"/>
<gene>
    <name evidence="1" type="primary">rpo6</name>
    <name evidence="1" type="synonym">rpoK</name>
    <name type="ordered locus">Tpen_0290</name>
</gene>
<evidence type="ECO:0000255" key="1">
    <source>
        <dbReference type="HAMAP-Rule" id="MF_00192"/>
    </source>
</evidence>
<comment type="function">
    <text evidence="1">DNA-dependent RNA polymerase (RNAP) catalyzes the transcription of DNA into RNA using the four ribonucleoside triphosphates as substrates.</text>
</comment>
<comment type="catalytic activity">
    <reaction evidence="1">
        <text>RNA(n) + a ribonucleoside 5'-triphosphate = RNA(n+1) + diphosphate</text>
        <dbReference type="Rhea" id="RHEA:21248"/>
        <dbReference type="Rhea" id="RHEA-COMP:14527"/>
        <dbReference type="Rhea" id="RHEA-COMP:17342"/>
        <dbReference type="ChEBI" id="CHEBI:33019"/>
        <dbReference type="ChEBI" id="CHEBI:61557"/>
        <dbReference type="ChEBI" id="CHEBI:140395"/>
        <dbReference type="EC" id="2.7.7.6"/>
    </reaction>
</comment>
<comment type="subunit">
    <text evidence="1">Part of the RNA polymerase complex.</text>
</comment>
<comment type="subcellular location">
    <subcellularLocation>
        <location evidence="1">Cytoplasm</location>
    </subcellularLocation>
</comment>
<comment type="similarity">
    <text evidence="1">Belongs to the archaeal Rpo6/eukaryotic RPB6 RNA polymerase subunit family.</text>
</comment>
<feature type="chain" id="PRO_1000071698" description="DNA-directed RNA polymerase subunit Rpo6">
    <location>
        <begin position="1"/>
        <end position="81"/>
    </location>
</feature>
<sequence>MKIGPPWLTRFERARIIGIRALQISLGAPVLIQVSEELSDPITIAEKELELGLLPIIVVRWTPEGKIQEIPIKYLKLRPQL</sequence>
<dbReference type="EC" id="2.7.7.6" evidence="1"/>
<dbReference type="EMBL" id="CP000505">
    <property type="protein sequence ID" value="ABL77700.1"/>
    <property type="molecule type" value="Genomic_DNA"/>
</dbReference>
<dbReference type="SMR" id="A1RWX0"/>
<dbReference type="STRING" id="368408.Tpen_0290"/>
<dbReference type="EnsemblBacteria" id="ABL77700">
    <property type="protein sequence ID" value="ABL77700"/>
    <property type="gene ID" value="Tpen_0290"/>
</dbReference>
<dbReference type="KEGG" id="tpe:Tpen_0290"/>
<dbReference type="eggNOG" id="arCOG01268">
    <property type="taxonomic scope" value="Archaea"/>
</dbReference>
<dbReference type="HOGENOM" id="CLU_112527_2_1_2"/>
<dbReference type="Proteomes" id="UP000000641">
    <property type="component" value="Chromosome"/>
</dbReference>
<dbReference type="GO" id="GO:0005737">
    <property type="term" value="C:cytoplasm"/>
    <property type="evidence" value="ECO:0007669"/>
    <property type="project" value="UniProtKB-SubCell"/>
</dbReference>
<dbReference type="GO" id="GO:0000428">
    <property type="term" value="C:DNA-directed RNA polymerase complex"/>
    <property type="evidence" value="ECO:0007669"/>
    <property type="project" value="UniProtKB-KW"/>
</dbReference>
<dbReference type="GO" id="GO:0003677">
    <property type="term" value="F:DNA binding"/>
    <property type="evidence" value="ECO:0007669"/>
    <property type="project" value="UniProtKB-UniRule"/>
</dbReference>
<dbReference type="GO" id="GO:0003899">
    <property type="term" value="F:DNA-directed RNA polymerase activity"/>
    <property type="evidence" value="ECO:0007669"/>
    <property type="project" value="UniProtKB-UniRule"/>
</dbReference>
<dbReference type="GO" id="GO:0006360">
    <property type="term" value="P:transcription by RNA polymerase I"/>
    <property type="evidence" value="ECO:0007669"/>
    <property type="project" value="TreeGrafter"/>
</dbReference>
<dbReference type="GO" id="GO:0006366">
    <property type="term" value="P:transcription by RNA polymerase II"/>
    <property type="evidence" value="ECO:0007669"/>
    <property type="project" value="TreeGrafter"/>
</dbReference>
<dbReference type="GO" id="GO:0042797">
    <property type="term" value="P:tRNA transcription by RNA polymerase III"/>
    <property type="evidence" value="ECO:0007669"/>
    <property type="project" value="TreeGrafter"/>
</dbReference>
<dbReference type="Gene3D" id="3.90.940.10">
    <property type="match status" value="1"/>
</dbReference>
<dbReference type="HAMAP" id="MF_00192">
    <property type="entry name" value="RNApol_arch_Rpo6"/>
    <property type="match status" value="1"/>
</dbReference>
<dbReference type="InterPro" id="IPR020708">
    <property type="entry name" value="DNA-dir_RNA_polK_14-18kDa_CS"/>
</dbReference>
<dbReference type="InterPro" id="IPR006110">
    <property type="entry name" value="Pol_omega/Rpo6/RPB6"/>
</dbReference>
<dbReference type="InterPro" id="IPR036161">
    <property type="entry name" value="RPB6/omega-like_sf"/>
</dbReference>
<dbReference type="InterPro" id="IPR006111">
    <property type="entry name" value="Rpo6/Rpb6"/>
</dbReference>
<dbReference type="NCBIfam" id="NF002207">
    <property type="entry name" value="PRK01099.1-2"/>
    <property type="match status" value="1"/>
</dbReference>
<dbReference type="NCBIfam" id="NF002208">
    <property type="entry name" value="PRK01099.1-3"/>
    <property type="match status" value="1"/>
</dbReference>
<dbReference type="PANTHER" id="PTHR47227">
    <property type="entry name" value="DNA-DIRECTED RNA POLYMERASE SUBUNIT K"/>
    <property type="match status" value="1"/>
</dbReference>
<dbReference type="PANTHER" id="PTHR47227:SF5">
    <property type="entry name" value="DNA-DIRECTED RNA POLYMERASES I, II, AND III SUBUNIT RPABC2"/>
    <property type="match status" value="1"/>
</dbReference>
<dbReference type="Pfam" id="PF01192">
    <property type="entry name" value="RNA_pol_Rpb6"/>
    <property type="match status" value="1"/>
</dbReference>
<dbReference type="PIRSF" id="PIRSF000778">
    <property type="entry name" value="RpoK/RPB6"/>
    <property type="match status" value="1"/>
</dbReference>
<dbReference type="SMART" id="SM01409">
    <property type="entry name" value="RNA_pol_Rpb6"/>
    <property type="match status" value="1"/>
</dbReference>
<dbReference type="SUPFAM" id="SSF63562">
    <property type="entry name" value="RPB6/omega subunit-like"/>
    <property type="match status" value="1"/>
</dbReference>
<dbReference type="PROSITE" id="PS01111">
    <property type="entry name" value="RNA_POL_K_14KD"/>
    <property type="match status" value="1"/>
</dbReference>